<sequence length="352" mass="36711">MFEKSTWIRLPRNVVVGHGVLDDAVEVVRDTHLTGRPLVVTSPTPKTVAAENVVAQFEAVGDDPAVVVVEEATFNSVERVLGEAEAVDPGYLVGVGGGKAIDIAKLASDHLNVGFVSVPTAASHDGIVSGRGSVPEGDTRHSVSAAPPLAVIADTGVIADAPWELTTAGCADIISNYTAVKDWRLANRLQHVPYSEYAGALSQMTAEMLVDNAANIKPELEESAWVVVKALVSSGVAMSIADSSRPASGSEHLFSHQLDRIAPGKALHGHQVGVGSILAEYLHSGQEGQWMAVRDALASLDAPTTADELGVADDEVLAALTSAHEIRDRYTILGGGISEVAAREAASRTGVI</sequence>
<proteinExistence type="inferred from homology"/>
<protein>
    <recommendedName>
        <fullName evidence="1">Glycerol-1-phosphate dehydrogenase [NAD(P)+]</fullName>
        <shortName evidence="1">G1P dehydrogenase</shortName>
        <shortName evidence="1">G1PDH</shortName>
        <ecNumber evidence="1">1.1.1.261</ecNumber>
    </recommendedName>
    <alternativeName>
        <fullName evidence="1">Enantiomeric glycerophosphate synthase</fullName>
    </alternativeName>
    <alternativeName>
        <fullName evidence="1">sn-glycerol-1-phosphate dehydrogenase</fullName>
    </alternativeName>
</protein>
<accession>Q9HS49</accession>
<evidence type="ECO:0000255" key="1">
    <source>
        <dbReference type="HAMAP-Rule" id="MF_00497"/>
    </source>
</evidence>
<comment type="function">
    <text evidence="1">Catalyzes the NAD(P)H-dependent reduction of dihydroxyacetonephosphate (DHAP or glycerone phosphate) to glycerol 1-phosphate (G1P). The G1P thus generated is used as the glycerophosphate backbone of phospholipids in the cellular membranes of Archaea.</text>
</comment>
<comment type="catalytic activity">
    <reaction evidence="1">
        <text>sn-glycerol 1-phosphate + NAD(+) = dihydroxyacetone phosphate + NADH + H(+)</text>
        <dbReference type="Rhea" id="RHEA:21412"/>
        <dbReference type="ChEBI" id="CHEBI:15378"/>
        <dbReference type="ChEBI" id="CHEBI:57540"/>
        <dbReference type="ChEBI" id="CHEBI:57642"/>
        <dbReference type="ChEBI" id="CHEBI:57685"/>
        <dbReference type="ChEBI" id="CHEBI:57945"/>
        <dbReference type="EC" id="1.1.1.261"/>
    </reaction>
</comment>
<comment type="catalytic activity">
    <reaction evidence="1">
        <text>sn-glycerol 1-phosphate + NADP(+) = dihydroxyacetone phosphate + NADPH + H(+)</text>
        <dbReference type="Rhea" id="RHEA:21416"/>
        <dbReference type="ChEBI" id="CHEBI:15378"/>
        <dbReference type="ChEBI" id="CHEBI:57642"/>
        <dbReference type="ChEBI" id="CHEBI:57685"/>
        <dbReference type="ChEBI" id="CHEBI:57783"/>
        <dbReference type="ChEBI" id="CHEBI:58349"/>
        <dbReference type="EC" id="1.1.1.261"/>
    </reaction>
</comment>
<comment type="cofactor">
    <cofactor evidence="1">
        <name>Zn(2+)</name>
        <dbReference type="ChEBI" id="CHEBI:29105"/>
    </cofactor>
    <text evidence="1">Binds 1 zinc ion per subunit.</text>
</comment>
<comment type="pathway">
    <text evidence="1">Membrane lipid metabolism; glycerophospholipid metabolism.</text>
</comment>
<comment type="subcellular location">
    <subcellularLocation>
        <location evidence="1">Cytoplasm</location>
    </subcellularLocation>
</comment>
<comment type="similarity">
    <text evidence="1">Belongs to the glycerol-1-phosphate dehydrogenase family.</text>
</comment>
<gene>
    <name evidence="1" type="primary">egsA</name>
    <name type="ordered locus">VNG_0406C</name>
</gene>
<dbReference type="EC" id="1.1.1.261" evidence="1"/>
<dbReference type="EMBL" id="AE004437">
    <property type="protein sequence ID" value="AAG18959.1"/>
    <property type="molecule type" value="Genomic_DNA"/>
</dbReference>
<dbReference type="PIR" id="C84199">
    <property type="entry name" value="C84199"/>
</dbReference>
<dbReference type="RefSeq" id="WP_010902254.1">
    <property type="nucleotide sequence ID" value="NC_002607.1"/>
</dbReference>
<dbReference type="SMR" id="Q9HS49"/>
<dbReference type="FunCoup" id="Q9HS49">
    <property type="interactions" value="9"/>
</dbReference>
<dbReference type="STRING" id="64091.VNG_0406C"/>
<dbReference type="PaxDb" id="64091-VNG_0406C"/>
<dbReference type="KEGG" id="hal:VNG_0406C"/>
<dbReference type="PATRIC" id="fig|64091.14.peg.303"/>
<dbReference type="HOGENOM" id="CLU_038362_0_0_2"/>
<dbReference type="InParanoid" id="Q9HS49"/>
<dbReference type="OrthoDB" id="8656at2157"/>
<dbReference type="PhylomeDB" id="Q9HS49"/>
<dbReference type="UniPathway" id="UPA00940"/>
<dbReference type="Proteomes" id="UP000000554">
    <property type="component" value="Chromosome"/>
</dbReference>
<dbReference type="GO" id="GO:0005737">
    <property type="term" value="C:cytoplasm"/>
    <property type="evidence" value="ECO:0007669"/>
    <property type="project" value="UniProtKB-SubCell"/>
</dbReference>
<dbReference type="GO" id="GO:0106357">
    <property type="term" value="F:glycerol-1-phosphate dehydrogenase (NAD+) activity"/>
    <property type="evidence" value="ECO:0007669"/>
    <property type="project" value="RHEA"/>
</dbReference>
<dbReference type="GO" id="GO:0106358">
    <property type="term" value="F:glycerol-1-phosphate dehydrogenase (NADP+) activity"/>
    <property type="evidence" value="ECO:0007669"/>
    <property type="project" value="RHEA"/>
</dbReference>
<dbReference type="GO" id="GO:0046872">
    <property type="term" value="F:metal ion binding"/>
    <property type="evidence" value="ECO:0007669"/>
    <property type="project" value="UniProtKB-KW"/>
</dbReference>
<dbReference type="GO" id="GO:0006650">
    <property type="term" value="P:glycerophospholipid metabolic process"/>
    <property type="evidence" value="ECO:0007669"/>
    <property type="project" value="UniProtKB-UniRule"/>
</dbReference>
<dbReference type="GO" id="GO:0008654">
    <property type="term" value="P:phospholipid biosynthetic process"/>
    <property type="evidence" value="ECO:0007669"/>
    <property type="project" value="UniProtKB-KW"/>
</dbReference>
<dbReference type="CDD" id="cd08173">
    <property type="entry name" value="Gro1PDH"/>
    <property type="match status" value="1"/>
</dbReference>
<dbReference type="Gene3D" id="3.40.50.1970">
    <property type="match status" value="1"/>
</dbReference>
<dbReference type="Gene3D" id="1.20.1090.10">
    <property type="entry name" value="Dehydroquinate synthase-like - alpha domain"/>
    <property type="match status" value="1"/>
</dbReference>
<dbReference type="HAMAP" id="MF_00497_A">
    <property type="entry name" value="G1P_dehydrogenase_A"/>
    <property type="match status" value="1"/>
</dbReference>
<dbReference type="InterPro" id="IPR023002">
    <property type="entry name" value="G1P_dehydrogenase_arc"/>
</dbReference>
<dbReference type="InterPro" id="IPR032837">
    <property type="entry name" value="G1PDH"/>
</dbReference>
<dbReference type="InterPro" id="IPR016205">
    <property type="entry name" value="Glycerol_DH"/>
</dbReference>
<dbReference type="NCBIfam" id="NF002022">
    <property type="entry name" value="PRK00843.1"/>
    <property type="match status" value="1"/>
</dbReference>
<dbReference type="PANTHER" id="PTHR43616">
    <property type="entry name" value="GLYCEROL DEHYDROGENASE"/>
    <property type="match status" value="1"/>
</dbReference>
<dbReference type="PANTHER" id="PTHR43616:SF5">
    <property type="entry name" value="GLYCEROL DEHYDROGENASE 1"/>
    <property type="match status" value="1"/>
</dbReference>
<dbReference type="Pfam" id="PF13685">
    <property type="entry name" value="Fe-ADH_2"/>
    <property type="match status" value="1"/>
</dbReference>
<dbReference type="PIRSF" id="PIRSF000112">
    <property type="entry name" value="Glycerol_dehydrogenase"/>
    <property type="match status" value="1"/>
</dbReference>
<dbReference type="SUPFAM" id="SSF56796">
    <property type="entry name" value="Dehydroquinate synthase-like"/>
    <property type="match status" value="1"/>
</dbReference>
<organism>
    <name type="scientific">Halobacterium salinarum (strain ATCC 700922 / JCM 11081 / NRC-1)</name>
    <name type="common">Halobacterium halobium</name>
    <dbReference type="NCBI Taxonomy" id="64091"/>
    <lineage>
        <taxon>Archaea</taxon>
        <taxon>Methanobacteriati</taxon>
        <taxon>Methanobacteriota</taxon>
        <taxon>Stenosarchaea group</taxon>
        <taxon>Halobacteria</taxon>
        <taxon>Halobacteriales</taxon>
        <taxon>Halobacteriaceae</taxon>
        <taxon>Halobacterium</taxon>
        <taxon>Halobacterium salinarum NRC-34001</taxon>
    </lineage>
</organism>
<keyword id="KW-0963">Cytoplasm</keyword>
<keyword id="KW-0444">Lipid biosynthesis</keyword>
<keyword id="KW-0443">Lipid metabolism</keyword>
<keyword id="KW-0479">Metal-binding</keyword>
<keyword id="KW-0520">NAD</keyword>
<keyword id="KW-0521">NADP</keyword>
<keyword id="KW-0560">Oxidoreductase</keyword>
<keyword id="KW-0594">Phospholipid biosynthesis</keyword>
<keyword id="KW-1208">Phospholipid metabolism</keyword>
<keyword id="KW-1185">Reference proteome</keyword>
<keyword id="KW-0862">Zinc</keyword>
<name>G1PDH_HALSA</name>
<reference key="1">
    <citation type="journal article" date="2000" name="Proc. Natl. Acad. Sci. U.S.A.">
        <title>Genome sequence of Halobacterium species NRC-1.</title>
        <authorList>
            <person name="Ng W.V."/>
            <person name="Kennedy S.P."/>
            <person name="Mahairas G.G."/>
            <person name="Berquist B."/>
            <person name="Pan M."/>
            <person name="Shukla H.D."/>
            <person name="Lasky S.R."/>
            <person name="Baliga N.S."/>
            <person name="Thorsson V."/>
            <person name="Sbrogna J."/>
            <person name="Swartzell S."/>
            <person name="Weir D."/>
            <person name="Hall J."/>
            <person name="Dahl T.A."/>
            <person name="Welti R."/>
            <person name="Goo Y.A."/>
            <person name="Leithauser B."/>
            <person name="Keller K."/>
            <person name="Cruz R."/>
            <person name="Danson M.J."/>
            <person name="Hough D.W."/>
            <person name="Maddocks D.G."/>
            <person name="Jablonski P.E."/>
            <person name="Krebs M.P."/>
            <person name="Angevine C.M."/>
            <person name="Dale H."/>
            <person name="Isenbarger T.A."/>
            <person name="Peck R.F."/>
            <person name="Pohlschroder M."/>
            <person name="Spudich J.L."/>
            <person name="Jung K.-H."/>
            <person name="Alam M."/>
            <person name="Freitas T."/>
            <person name="Hou S."/>
            <person name="Daniels C.J."/>
            <person name="Dennis P.P."/>
            <person name="Omer A.D."/>
            <person name="Ebhardt H."/>
            <person name="Lowe T.M."/>
            <person name="Liang P."/>
            <person name="Riley M."/>
            <person name="Hood L."/>
            <person name="DasSarma S."/>
        </authorList>
    </citation>
    <scope>NUCLEOTIDE SEQUENCE [LARGE SCALE GENOMIC DNA]</scope>
    <source>
        <strain>ATCC 700922 / JCM 11081 / NRC-1</strain>
    </source>
</reference>
<feature type="chain" id="PRO_0000157340" description="Glycerol-1-phosphate dehydrogenase [NAD(P)+]">
    <location>
        <begin position="1"/>
        <end position="352"/>
    </location>
</feature>
<feature type="binding site" evidence="1">
    <location>
        <begin position="98"/>
        <end position="102"/>
    </location>
    <ligand>
        <name>NAD(+)</name>
        <dbReference type="ChEBI" id="CHEBI:57540"/>
    </ligand>
</feature>
<feature type="binding site" evidence="1">
    <location>
        <begin position="120"/>
        <end position="123"/>
    </location>
    <ligand>
        <name>NAD(+)</name>
        <dbReference type="ChEBI" id="CHEBI:57540"/>
    </ligand>
</feature>
<feature type="binding site" evidence="1">
    <location>
        <position position="125"/>
    </location>
    <ligand>
        <name>substrate</name>
    </ligand>
</feature>
<feature type="binding site" evidence="1">
    <location>
        <position position="129"/>
    </location>
    <ligand>
        <name>NAD(+)</name>
        <dbReference type="ChEBI" id="CHEBI:57540"/>
    </ligand>
</feature>
<feature type="binding site" evidence="1">
    <location>
        <position position="172"/>
    </location>
    <ligand>
        <name>substrate</name>
    </ligand>
</feature>
<feature type="binding site" evidence="1">
    <location>
        <position position="172"/>
    </location>
    <ligand>
        <name>Zn(2+)</name>
        <dbReference type="ChEBI" id="CHEBI:29105"/>
        <note>catalytic</note>
    </ligand>
</feature>
<feature type="binding site" evidence="1">
    <location>
        <position position="252"/>
    </location>
    <ligand>
        <name>Zn(2+)</name>
        <dbReference type="ChEBI" id="CHEBI:29105"/>
        <note>catalytic</note>
    </ligand>
</feature>
<feature type="binding site" evidence="1">
    <location>
        <position position="256"/>
    </location>
    <ligand>
        <name>substrate</name>
    </ligand>
</feature>
<feature type="binding site" evidence="1">
    <location>
        <position position="268"/>
    </location>
    <ligand>
        <name>Zn(2+)</name>
        <dbReference type="ChEBI" id="CHEBI:29105"/>
        <note>catalytic</note>
    </ligand>
</feature>